<protein>
    <recommendedName>
        <fullName evidence="20">Phosphomannomutase 2</fullName>
        <shortName evidence="20">PMM 2</shortName>
        <ecNumber evidence="14">5.4.2.8</ecNumber>
    </recommendedName>
</protein>
<proteinExistence type="evidence at protein level"/>
<reference key="1">
    <citation type="journal article" date="1997" name="Nat. Genet.">
        <title>Mutations in PMM2, a phosphomannomutase gene on chromosome 16p13, in carbohydrate-deficient glycoprotein type I syndrome (Jaeken syndrome).</title>
        <authorList>
            <person name="Matthijs G."/>
            <person name="Schollen E."/>
            <person name="Pardon E."/>
            <person name="Veiga-Da-Cunha M."/>
            <person name="Jaeken J."/>
            <person name="Cassiman J.-J."/>
            <person name="van Schaftingen E."/>
        </authorList>
    </citation>
    <scope>NUCLEOTIDE SEQUENCE [MRNA] (ISOFORM 1)</scope>
    <scope>VARIANTS CDG1A</scope>
</reference>
<reference key="2">
    <citation type="journal article" date="1997" name="Nat. Genet.">
        <authorList>
            <person name="Matthijs G."/>
            <person name="Schollen E."/>
            <person name="Pardon E."/>
            <person name="Veiga-Da-Cunha M."/>
            <person name="Jaeken J."/>
            <person name="Cassiman J.-J."/>
            <person name="van Schaftingen E."/>
        </authorList>
    </citation>
    <scope>ERRATUM OF PUBMED:9140401</scope>
</reference>
<reference key="3">
    <citation type="journal article" date="1998" name="Hum. Mol. Genet.">
        <title>Comparative analysis of the phosphomannomutase genes PMM1, PMM2 and PMM2psi: the sequence variation in the processed pseudogene is a reflection of the mutations found in the functional gene.</title>
        <authorList>
            <person name="Schollen E."/>
            <person name="Pardon E."/>
            <person name="Heykants L."/>
            <person name="Renard J."/>
            <person name="Doggett N.A."/>
            <person name="Callen D.F."/>
            <person name="Cassiman J.J."/>
            <person name="Matthijs G."/>
        </authorList>
    </citation>
    <scope>NUCLEOTIDE SEQUENCE [GENOMIC DNA]</scope>
</reference>
<reference key="4">
    <citation type="journal article" date="2004" name="Nat. Genet.">
        <title>Complete sequencing and characterization of 21,243 full-length human cDNAs.</title>
        <authorList>
            <person name="Ota T."/>
            <person name="Suzuki Y."/>
            <person name="Nishikawa T."/>
            <person name="Otsuki T."/>
            <person name="Sugiyama T."/>
            <person name="Irie R."/>
            <person name="Wakamatsu A."/>
            <person name="Hayashi K."/>
            <person name="Sato H."/>
            <person name="Nagai K."/>
            <person name="Kimura K."/>
            <person name="Makita H."/>
            <person name="Sekine M."/>
            <person name="Obayashi M."/>
            <person name="Nishi T."/>
            <person name="Shibahara T."/>
            <person name="Tanaka T."/>
            <person name="Ishii S."/>
            <person name="Yamamoto J."/>
            <person name="Saito K."/>
            <person name="Kawai Y."/>
            <person name="Isono Y."/>
            <person name="Nakamura Y."/>
            <person name="Nagahari K."/>
            <person name="Murakami K."/>
            <person name="Yasuda T."/>
            <person name="Iwayanagi T."/>
            <person name="Wagatsuma M."/>
            <person name="Shiratori A."/>
            <person name="Sudo H."/>
            <person name="Hosoiri T."/>
            <person name="Kaku Y."/>
            <person name="Kodaira H."/>
            <person name="Kondo H."/>
            <person name="Sugawara M."/>
            <person name="Takahashi M."/>
            <person name="Kanda K."/>
            <person name="Yokoi T."/>
            <person name="Furuya T."/>
            <person name="Kikkawa E."/>
            <person name="Omura Y."/>
            <person name="Abe K."/>
            <person name="Kamihara K."/>
            <person name="Katsuta N."/>
            <person name="Sato K."/>
            <person name="Tanikawa M."/>
            <person name="Yamazaki M."/>
            <person name="Ninomiya K."/>
            <person name="Ishibashi T."/>
            <person name="Yamashita H."/>
            <person name="Murakawa K."/>
            <person name="Fujimori K."/>
            <person name="Tanai H."/>
            <person name="Kimata M."/>
            <person name="Watanabe M."/>
            <person name="Hiraoka S."/>
            <person name="Chiba Y."/>
            <person name="Ishida S."/>
            <person name="Ono Y."/>
            <person name="Takiguchi S."/>
            <person name="Watanabe S."/>
            <person name="Yosida M."/>
            <person name="Hotuta T."/>
            <person name="Kusano J."/>
            <person name="Kanehori K."/>
            <person name="Takahashi-Fujii A."/>
            <person name="Hara H."/>
            <person name="Tanase T.-O."/>
            <person name="Nomura Y."/>
            <person name="Togiya S."/>
            <person name="Komai F."/>
            <person name="Hara R."/>
            <person name="Takeuchi K."/>
            <person name="Arita M."/>
            <person name="Imose N."/>
            <person name="Musashino K."/>
            <person name="Yuuki H."/>
            <person name="Oshima A."/>
            <person name="Sasaki N."/>
            <person name="Aotsuka S."/>
            <person name="Yoshikawa Y."/>
            <person name="Matsunawa H."/>
            <person name="Ichihara T."/>
            <person name="Shiohata N."/>
            <person name="Sano S."/>
            <person name="Moriya S."/>
            <person name="Momiyama H."/>
            <person name="Satoh N."/>
            <person name="Takami S."/>
            <person name="Terashima Y."/>
            <person name="Suzuki O."/>
            <person name="Nakagawa S."/>
            <person name="Senoh A."/>
            <person name="Mizoguchi H."/>
            <person name="Goto Y."/>
            <person name="Shimizu F."/>
            <person name="Wakebe H."/>
            <person name="Hishigaki H."/>
            <person name="Watanabe T."/>
            <person name="Sugiyama A."/>
            <person name="Takemoto M."/>
            <person name="Kawakami B."/>
            <person name="Yamazaki M."/>
            <person name="Watanabe K."/>
            <person name="Kumagai A."/>
            <person name="Itakura S."/>
            <person name="Fukuzumi Y."/>
            <person name="Fujimori Y."/>
            <person name="Komiyama M."/>
            <person name="Tashiro H."/>
            <person name="Tanigami A."/>
            <person name="Fujiwara T."/>
            <person name="Ono T."/>
            <person name="Yamada K."/>
            <person name="Fujii Y."/>
            <person name="Ozaki K."/>
            <person name="Hirao M."/>
            <person name="Ohmori Y."/>
            <person name="Kawabata A."/>
            <person name="Hikiji T."/>
            <person name="Kobatake N."/>
            <person name="Inagaki H."/>
            <person name="Ikema Y."/>
            <person name="Okamoto S."/>
            <person name="Okitani R."/>
            <person name="Kawakami T."/>
            <person name="Noguchi S."/>
            <person name="Itoh T."/>
            <person name="Shigeta K."/>
            <person name="Senba T."/>
            <person name="Matsumura K."/>
            <person name="Nakajima Y."/>
            <person name="Mizuno T."/>
            <person name="Morinaga M."/>
            <person name="Sasaki M."/>
            <person name="Togashi T."/>
            <person name="Oyama M."/>
            <person name="Hata H."/>
            <person name="Watanabe M."/>
            <person name="Komatsu T."/>
            <person name="Mizushima-Sugano J."/>
            <person name="Satoh T."/>
            <person name="Shirai Y."/>
            <person name="Takahashi Y."/>
            <person name="Nakagawa K."/>
            <person name="Okumura K."/>
            <person name="Nagase T."/>
            <person name="Nomura N."/>
            <person name="Kikuchi H."/>
            <person name="Masuho Y."/>
            <person name="Yamashita R."/>
            <person name="Nakai K."/>
            <person name="Yada T."/>
            <person name="Nakamura Y."/>
            <person name="Ohara O."/>
            <person name="Isogai T."/>
            <person name="Sugano S."/>
        </authorList>
    </citation>
    <scope>NUCLEOTIDE SEQUENCE [LARGE SCALE MRNA] (ISOFORMS 1 AND 2)</scope>
    <source>
        <tissue>Placenta</tissue>
    </source>
</reference>
<reference key="5">
    <citation type="journal article" date="2004" name="Nature">
        <title>The sequence and analysis of duplication-rich human chromosome 16.</title>
        <authorList>
            <person name="Martin J."/>
            <person name="Han C."/>
            <person name="Gordon L.A."/>
            <person name="Terry A."/>
            <person name="Prabhakar S."/>
            <person name="She X."/>
            <person name="Xie G."/>
            <person name="Hellsten U."/>
            <person name="Chan Y.M."/>
            <person name="Altherr M."/>
            <person name="Couronne O."/>
            <person name="Aerts A."/>
            <person name="Bajorek E."/>
            <person name="Black S."/>
            <person name="Blumer H."/>
            <person name="Branscomb E."/>
            <person name="Brown N.C."/>
            <person name="Bruno W.J."/>
            <person name="Buckingham J.M."/>
            <person name="Callen D.F."/>
            <person name="Campbell C.S."/>
            <person name="Campbell M.L."/>
            <person name="Campbell E.W."/>
            <person name="Caoile C."/>
            <person name="Challacombe J.F."/>
            <person name="Chasteen L.A."/>
            <person name="Chertkov O."/>
            <person name="Chi H.C."/>
            <person name="Christensen M."/>
            <person name="Clark L.M."/>
            <person name="Cohn J.D."/>
            <person name="Denys M."/>
            <person name="Detter J.C."/>
            <person name="Dickson M."/>
            <person name="Dimitrijevic-Bussod M."/>
            <person name="Escobar J."/>
            <person name="Fawcett J.J."/>
            <person name="Flowers D."/>
            <person name="Fotopulos D."/>
            <person name="Glavina T."/>
            <person name="Gomez M."/>
            <person name="Gonzales E."/>
            <person name="Goodstein D."/>
            <person name="Goodwin L.A."/>
            <person name="Grady D.L."/>
            <person name="Grigoriev I."/>
            <person name="Groza M."/>
            <person name="Hammon N."/>
            <person name="Hawkins T."/>
            <person name="Haydu L."/>
            <person name="Hildebrand C.E."/>
            <person name="Huang W."/>
            <person name="Israni S."/>
            <person name="Jett J."/>
            <person name="Jewett P.B."/>
            <person name="Kadner K."/>
            <person name="Kimball H."/>
            <person name="Kobayashi A."/>
            <person name="Krawczyk M.-C."/>
            <person name="Leyba T."/>
            <person name="Longmire J.L."/>
            <person name="Lopez F."/>
            <person name="Lou Y."/>
            <person name="Lowry S."/>
            <person name="Ludeman T."/>
            <person name="Manohar C.F."/>
            <person name="Mark G.A."/>
            <person name="McMurray K.L."/>
            <person name="Meincke L.J."/>
            <person name="Morgan J."/>
            <person name="Moyzis R.K."/>
            <person name="Mundt M.O."/>
            <person name="Munk A.C."/>
            <person name="Nandkeshwar R.D."/>
            <person name="Pitluck S."/>
            <person name="Pollard M."/>
            <person name="Predki P."/>
            <person name="Parson-Quintana B."/>
            <person name="Ramirez L."/>
            <person name="Rash S."/>
            <person name="Retterer J."/>
            <person name="Ricke D.O."/>
            <person name="Robinson D.L."/>
            <person name="Rodriguez A."/>
            <person name="Salamov A."/>
            <person name="Saunders E.H."/>
            <person name="Scott D."/>
            <person name="Shough T."/>
            <person name="Stallings R.L."/>
            <person name="Stalvey M."/>
            <person name="Sutherland R.D."/>
            <person name="Tapia R."/>
            <person name="Tesmer J.G."/>
            <person name="Thayer N."/>
            <person name="Thompson L.S."/>
            <person name="Tice H."/>
            <person name="Torney D.C."/>
            <person name="Tran-Gyamfi M."/>
            <person name="Tsai M."/>
            <person name="Ulanovsky L.E."/>
            <person name="Ustaszewska A."/>
            <person name="Vo N."/>
            <person name="White P.S."/>
            <person name="Williams A.L."/>
            <person name="Wills P.L."/>
            <person name="Wu J.-R."/>
            <person name="Wu K."/>
            <person name="Yang J."/>
            <person name="DeJong P."/>
            <person name="Bruce D."/>
            <person name="Doggett N.A."/>
            <person name="Deaven L."/>
            <person name="Schmutz J."/>
            <person name="Grimwood J."/>
            <person name="Richardson P."/>
            <person name="Rokhsar D.S."/>
            <person name="Eichler E.E."/>
            <person name="Gilna P."/>
            <person name="Lucas S.M."/>
            <person name="Myers R.M."/>
            <person name="Rubin E.M."/>
            <person name="Pennacchio L.A."/>
        </authorList>
    </citation>
    <scope>NUCLEOTIDE SEQUENCE [LARGE SCALE GENOMIC DNA]</scope>
</reference>
<reference key="6">
    <citation type="submission" date="2005-09" db="EMBL/GenBank/DDBJ databases">
        <authorList>
            <person name="Mural R.J."/>
            <person name="Istrail S."/>
            <person name="Sutton G.G."/>
            <person name="Florea L."/>
            <person name="Halpern A.L."/>
            <person name="Mobarry C.M."/>
            <person name="Lippert R."/>
            <person name="Walenz B."/>
            <person name="Shatkay H."/>
            <person name="Dew I."/>
            <person name="Miller J.R."/>
            <person name="Flanigan M.J."/>
            <person name="Edwards N.J."/>
            <person name="Bolanos R."/>
            <person name="Fasulo D."/>
            <person name="Halldorsson B.V."/>
            <person name="Hannenhalli S."/>
            <person name="Turner R."/>
            <person name="Yooseph S."/>
            <person name="Lu F."/>
            <person name="Nusskern D.R."/>
            <person name="Shue B.C."/>
            <person name="Zheng X.H."/>
            <person name="Zhong F."/>
            <person name="Delcher A.L."/>
            <person name="Huson D.H."/>
            <person name="Kravitz S.A."/>
            <person name="Mouchard L."/>
            <person name="Reinert K."/>
            <person name="Remington K.A."/>
            <person name="Clark A.G."/>
            <person name="Waterman M.S."/>
            <person name="Eichler E.E."/>
            <person name="Adams M.D."/>
            <person name="Hunkapiller M.W."/>
            <person name="Myers E.W."/>
            <person name="Venter J.C."/>
        </authorList>
    </citation>
    <scope>NUCLEOTIDE SEQUENCE [LARGE SCALE GENOMIC DNA]</scope>
</reference>
<reference key="7">
    <citation type="journal article" date="2004" name="Genome Res.">
        <title>The status, quality, and expansion of the NIH full-length cDNA project: the Mammalian Gene Collection (MGC).</title>
        <authorList>
            <consortium name="The MGC Project Team"/>
        </authorList>
    </citation>
    <scope>NUCLEOTIDE SEQUENCE [LARGE SCALE MRNA] (ISOFORM 1)</scope>
    <source>
        <tissue>Pancreas</tissue>
    </source>
</reference>
<reference key="8">
    <citation type="journal article" date="2006" name="J. Biol. Chem.">
        <title>The X-ray crystal structures of human alpha-phosphomannomutase 1 reveal the structural basis of congenital disorder of glycosylation type 1a.</title>
        <authorList>
            <person name="Silvaggi N.R."/>
            <person name="Zhang C."/>
            <person name="Lu Z."/>
            <person name="Dai J."/>
            <person name="Dunaway-Mariano D."/>
            <person name="Allen K.N."/>
        </authorList>
    </citation>
    <scope>CATALYTIC ACTIVITY</scope>
    <scope>BIOPHYSICOCHEMICAL PROPERTIES</scope>
</reference>
<reference key="9">
    <citation type="journal article" date="2011" name="BMC Syst. Biol.">
        <title>Initial characterization of the human central proteome.</title>
        <authorList>
            <person name="Burkard T.R."/>
            <person name="Planyavsky M."/>
            <person name="Kaupe I."/>
            <person name="Breitwieser F.P."/>
            <person name="Buerckstuemmer T."/>
            <person name="Bennett K.L."/>
            <person name="Superti-Furga G."/>
            <person name="Colinge J."/>
        </authorList>
    </citation>
    <scope>IDENTIFICATION BY MASS SPECTROMETRY [LARGE SCALE ANALYSIS]</scope>
</reference>
<reference key="10">
    <citation type="journal article" date="2012" name="Mol. Cell. Proteomics">
        <title>Comparative large-scale characterisation of plant vs. mammal proteins reveals similar and idiosyncratic N-alpha acetylation features.</title>
        <authorList>
            <person name="Bienvenut W.V."/>
            <person name="Sumpton D."/>
            <person name="Martinez A."/>
            <person name="Lilla S."/>
            <person name="Espagne C."/>
            <person name="Meinnel T."/>
            <person name="Giglione C."/>
        </authorList>
    </citation>
    <scope>ACETYLATION [LARGE SCALE ANALYSIS] AT ALA-2</scope>
    <scope>CLEAVAGE OF INITIATOR METHIONINE [LARGE SCALE ANALYSIS]</scope>
    <scope>IDENTIFICATION BY MASS SPECTROMETRY [LARGE SCALE ANALYSIS]</scope>
</reference>
<reference key="11">
    <citation type="journal article" date="2012" name="Proc. Natl. Acad. Sci. U.S.A.">
        <title>N-terminal acetylome analyses and functional insights of the N-terminal acetyltransferase NatB.</title>
        <authorList>
            <person name="Van Damme P."/>
            <person name="Lasa M."/>
            <person name="Polevoda B."/>
            <person name="Gazquez C."/>
            <person name="Elosegui-Artola A."/>
            <person name="Kim D.S."/>
            <person name="De Juan-Pardo E."/>
            <person name="Demeyer K."/>
            <person name="Hole K."/>
            <person name="Larrea E."/>
            <person name="Timmerman E."/>
            <person name="Prieto J."/>
            <person name="Arnesen T."/>
            <person name="Sherman F."/>
            <person name="Gevaert K."/>
            <person name="Aldabe R."/>
        </authorList>
    </citation>
    <scope>ACETYLATION [LARGE SCALE ANALYSIS] AT ALA-2</scope>
    <scope>CLEAVAGE OF INITIATOR METHIONINE [LARGE SCALE ANALYSIS]</scope>
    <scope>IDENTIFICATION BY MASS SPECTROMETRY [LARGE SCALE ANALYSIS]</scope>
</reference>
<reference key="12">
    <citation type="journal article" date="2014" name="J. Proteomics">
        <title>An enzyme assisted RP-RPLC approach for in-depth analysis of human liver phosphoproteome.</title>
        <authorList>
            <person name="Bian Y."/>
            <person name="Song C."/>
            <person name="Cheng K."/>
            <person name="Dong M."/>
            <person name="Wang F."/>
            <person name="Huang J."/>
            <person name="Sun D."/>
            <person name="Wang L."/>
            <person name="Ye M."/>
            <person name="Zou H."/>
        </authorList>
    </citation>
    <scope>IDENTIFICATION BY MASS SPECTROMETRY [LARGE SCALE ANALYSIS]</scope>
    <source>
        <tissue>Liver</tissue>
    </source>
</reference>
<reference key="13">
    <citation type="journal article" date="2007" name="Structure">
        <title>Ensemble refinement of protein crystal structures: validation and application.</title>
        <authorList>
            <person name="Levin E.J."/>
            <person name="Kondrashov D.A."/>
            <person name="Wesenberg G.E."/>
            <person name="Phillips G.N. Jr."/>
        </authorList>
    </citation>
    <scope>X-RAY CRYSTALLOGRAPHY (2.09 ANGSTROMS)</scope>
</reference>
<reference key="14">
    <citation type="submission" date="2009-02" db="PDB data bank">
        <title>X-ray structure of human phosphomannomutase 2 (PMM2).</title>
        <authorList>
            <consortium name="Center for eukaryotic structural genomics (CESG)"/>
        </authorList>
    </citation>
    <scope>X-RAY CRYSTALLOGRAPHY (2.09 ANGSTROMS)</scope>
</reference>
<reference key="15">
    <citation type="journal article" date="1999" name="Mol. Genet. Metab.">
        <title>Phosphomannomutase deficiency: the molecular basis of the classical Jaeken syndrome (CDGS type Ia).</title>
        <authorList>
            <person name="Matthijs G."/>
            <person name="Schollen E."/>
            <person name="Heykants L."/>
            <person name="Gruenewald S."/>
        </authorList>
    </citation>
    <scope>REVIEW ON VARIANTS CDG1A</scope>
</reference>
<reference key="16">
    <citation type="journal article" date="1998" name="Am. J. Hum. Genet.">
        <title>Lack of homozygotes for the most frequent disease allele in carbohydrate-deficient glycoprotein syndrome type 1A.</title>
        <authorList>
            <person name="Matthijs G."/>
            <person name="Schollen E."/>
            <person name="van Schaftingen E."/>
            <person name="Cassiman J.-J."/>
            <person name="Jaeken J."/>
        </authorList>
    </citation>
    <scope>VARIANTS CDG1A</scope>
</reference>
<reference key="17">
    <citation type="journal article" date="1998" name="Eur. J. Hum. Genet.">
        <title>Absence of homozygosity for predominant mutations in PMM2 in Danish patients with carbohydrate-deficient glycoprotein syndrome type 1.</title>
        <authorList>
            <person name="Kjaergaard S."/>
            <person name="Skovby F."/>
            <person name="Schwartz M."/>
        </authorList>
    </citation>
    <scope>VARIANTS CDG1A ARG-117 AND GLU-223</scope>
</reference>
<reference key="18">
    <citation type="journal article" date="1999" name="Clin. Genet.">
        <title>Missense mutations in phosphomannomutase 2 gene in two Japanese families with carbohydrate-deficient glycoprotein syndrome type 1.</title>
        <authorList>
            <person name="Kondo I."/>
            <person name="Mizugishi K."/>
            <person name="Yoneda Y."/>
            <person name="Hashimoto T."/>
            <person name="Kuwajima K."/>
            <person name="Yuasa I."/>
            <person name="Shigemoto K."/>
            <person name="Kuroda Y."/>
        </authorList>
    </citation>
    <scope>VARIANTS CDG1A LEU-144; SER-229 AND PRO-238</scope>
</reference>
<reference key="19">
    <citation type="journal article" date="1999" name="Eur. J. Hum. Genet.">
        <title>Carbohydrate-deficient glycoprotein syndrome type 1A: expression and characterisation of wild type and mutant PMM2 in E. coli.</title>
        <authorList>
            <person name="Kjaergaard S."/>
            <person name="Skovby F."/>
            <person name="Schwartz M."/>
        </authorList>
    </citation>
    <scope>VARIANT CDG1A GLY-192</scope>
    <scope>CHARACTERIZATION OF VARIANTS CDG1A ARG-117; LEU-119; HIS-141; GLY-192; GLU-223 AND ARG-237</scope>
</reference>
<reference key="20">
    <citation type="journal article" date="1999" name="Hum. Mutat.">
        <title>Characterization of the 415G&gt;A (E139K) PMM2 mutation in carbohydrate-deficient glycoprotein syndrome type Ia disrupting a splicing enhancer resulting in exon 5 skipping.</title>
        <authorList>
            <person name="Vuillaumier-Barrot S."/>
            <person name="Barnier A."/>
            <person name="Cuer M."/>
            <person name="Durand G."/>
            <person name="Grandchamp B."/>
            <person name="Seta N."/>
        </authorList>
    </citation>
    <scope>VARIANTS CDG1A LYS-139 AND HIS-141</scope>
</reference>
<reference key="21">
    <citation type="journal article" date="2000" name="Hum. Mutat.">
        <title>Mutations in PMM2 that cause congenital disorders of glycosylation, type Ia (CDG-Ia).</title>
        <authorList>
            <person name="Matthijs G."/>
            <person name="Schollen E."/>
            <person name="Bjursell C."/>
            <person name="Erlandson A."/>
            <person name="Freeze H."/>
            <person name="Imtiaz F."/>
            <person name="Kjaergaard S."/>
            <person name="Martinsson T."/>
            <person name="Schwartz M."/>
            <person name="Seta N."/>
            <person name="Vuillaumier-Barrot S."/>
            <person name="Westphal V."/>
            <person name="Winchester B."/>
        </authorList>
    </citation>
    <scope>VARIANTS CDG1A TYR-9; CYS-11; ARG-32; ALA-44; TYR-65; MET-67; SER-69; CYS-76; LYS-101; PHE-103; CYS-106; VAL-108; LEU-113; ARG-117; LEU-119; THR-120; GLN-123; MET-129; ALA-131; ASN-132; THR-132; LYS-139; HIS-141; ASN-148; GLY-151; THR-153; SER-157; TRP-162; VAL-172; ARG-175; SER-183; GLY-185; GLY-188; GLY-192; ARG-195; SER-206; ALA-208; ILE-216; SER-216; GLU-217; LEU-218; GLU-223; SER-226; ARG-228; CYS-228; SER-229; MET-231; THR-233; ARG-237; MET-237; GLY-238 AND SER-241</scope>
    <scope>VARIANT ALA-197</scope>
</reference>
<reference key="22">
    <citation type="journal article" date="2000" name="Hum. Mutat.">
        <title>PMM2 mutation spectrum, including 10 novel mutations, in a large CDG type 1A family material with a focus on Scandinavian families.</title>
        <authorList>
            <person name="Bjursell C."/>
            <person name="Erlandson A."/>
            <person name="Nordling M."/>
            <person name="Nilsson S."/>
            <person name="Wahlstroem J."/>
            <person name="Stibler H."/>
            <person name="Kristiansson B."/>
            <person name="Martinsson T."/>
        </authorList>
    </citation>
    <scope>VARIANTS CDG1A TYR-9; CYS-11; MET-67; LEU-113; ARG-117; LEU-119; GLN-123; MET-129; HIS-141; VAL-172; ARG-175; SER-183; GLY-185; GLY-192; SER-216; GLU-217; GLU-223; ARG-228; MET-231 AND ARG-237</scope>
</reference>
<reference key="23">
    <citation type="journal article" date="2000" name="J. Inherit. Metab. Dis.">
        <title>Genotypes and phenotypes of patients in the UK with carbohydrate-deficient glycoprotein syndrome type 1.</title>
        <authorList>
            <person name="Imtiaz F."/>
            <person name="Worthington V."/>
            <person name="Champion M."/>
            <person name="Beesley C."/>
            <person name="Charlwood J."/>
            <person name="Clayton P."/>
            <person name="Keir G."/>
            <person name="Mian N."/>
            <person name="Winchester B."/>
        </authorList>
    </citation>
    <scope>VARIANTS CDG1A LEU-119; ASN-132; HIS-141; ASN-148; SER-183; ALA-208; MET-231 AND MET-237</scope>
</reference>
<reference key="24">
    <citation type="journal article" date="2001" name="Mol. Genet. Metab.">
        <title>Functional analysis of novel mutations in a congenital disorder of glycosylation Ia patient with mixed Asian ancestry.</title>
        <authorList>
            <person name="Westphal V."/>
            <person name="Enns G.M."/>
            <person name="McCracken M.F."/>
            <person name="Freeze H.H."/>
        </authorList>
    </citation>
    <scope>VARIANT CDG1A VAL-104</scope>
</reference>
<reference key="25">
    <citation type="journal article" date="2002" name="Eur. J. Hum. Genet.">
        <title>DHPLC analysis as a platform for molecular diagnosis of congenital disorders of glycosylation (CDG).</title>
        <authorList>
            <person name="Schollen E."/>
            <person name="Martens K."/>
            <person name="Geuzens E."/>
            <person name="Matthijs G."/>
        </authorList>
    </citation>
    <scope>VARIANTS CDG1A GLU-15; CYS-64; ALA-93; SER-214 AND ASN-223</scope>
    <scope>VARIANT ARG-42</scope>
</reference>
<reference key="26">
    <citation type="journal article" date="2005" name="Hum. Mutat.">
        <title>A new insight into PMM2 mutations in the French population.</title>
        <authorList>
            <person name="Le Bizec C."/>
            <person name="Vuillaumier-Barrot S."/>
            <person name="Barnier A."/>
            <person name="Dupre T."/>
            <person name="Durand G."/>
            <person name="Seta N."/>
        </authorList>
    </citation>
    <scope>VARIANTS CDG1A TYR-9; SER-20; ARG-32; HIS-37; LEU-44; TYR-65; SER-69; PHE-103; VAL-108; LEU-113; LEU-119; GLN-123; MET-129; ALA-131; THR-132; PHE-132; LYS-139; CYS-141; HIS-141; THR-153; SER-157; TRP-162; VAL-176; HIS-177; SER-214; SER-226; MET-231; ARG-237; MET-237 AND SER-241</scope>
    <scope>VARIANTS ARG-42 AND ALA-197</scope>
    <scope>CHARACTERIZATION OF VARIANTS CDG1A SER-20; HIS-37; PHE-132; LYS-139; CYS-141; HIS-141; VAL-176 AND HIS-177</scope>
</reference>
<reference key="27">
    <citation type="journal article" date="2007" name="Mol. Genet. Metab.">
        <title>Characterization of two unusual truncating PMM2 mutations in two CDG-Ia patients.</title>
        <authorList>
            <person name="Schollen E."/>
            <person name="Keldermans L."/>
            <person name="Foulquier F."/>
            <person name="Briones P."/>
            <person name="Chabas A."/>
            <person name="Sanchez-Valverde F."/>
            <person name="Adamowicz M."/>
            <person name="Pronicka E."/>
            <person name="Wevers R."/>
            <person name="Matthijs G."/>
        </authorList>
    </citation>
    <scope>VARIANTS CDG1A ALA-44 AND MET-231</scope>
</reference>
<keyword id="KW-0002">3D-structure</keyword>
<keyword id="KW-0007">Acetylation</keyword>
<keyword id="KW-0025">Alternative splicing</keyword>
<keyword id="KW-0900">Congenital disorder of glycosylation</keyword>
<keyword id="KW-0963">Cytoplasm</keyword>
<keyword id="KW-0225">Disease variant</keyword>
<keyword id="KW-0413">Isomerase</keyword>
<keyword id="KW-0460">Magnesium</keyword>
<keyword id="KW-0479">Metal-binding</keyword>
<keyword id="KW-1267">Proteomics identification</keyword>
<keyword id="KW-1185">Reference proteome</keyword>
<accession>O15305</accession>
<accession>A8K672</accession>
<accession>B7Z6R0</accession>
<accession>D3DUF3</accession>
<name>PMM2_HUMAN</name>
<comment type="function">
    <text evidence="2">Involved in the synthesis of the GDP-mannose and dolichol-phosphate-mannose required for a number of critical mannosyl transfer reactions.</text>
</comment>
<comment type="catalytic activity">
    <reaction evidence="14">
        <text>alpha-D-mannose 1-phosphate = D-mannose 6-phosphate</text>
        <dbReference type="Rhea" id="RHEA:11140"/>
        <dbReference type="ChEBI" id="CHEBI:58409"/>
        <dbReference type="ChEBI" id="CHEBI:58735"/>
        <dbReference type="EC" id="5.4.2.8"/>
    </reaction>
</comment>
<comment type="biophysicochemical properties">
    <kinetics>
        <KM evidence="14">16 uM for alpha-D-mannose 1-phosphate</KM>
        <KM evidence="14">13.5 uM for alpha-D-glucose 1-phosphate</KM>
    </kinetics>
</comment>
<comment type="pathway">
    <text>Nucleotide-sugar biosynthesis; GDP-alpha-D-mannose biosynthesis; alpha-D-mannose 1-phosphate from D-fructose 6-phosphate: step 2/2.</text>
</comment>
<comment type="subunit">
    <text evidence="2">Homodimer.</text>
</comment>
<comment type="interaction">
    <interactant intactId="EBI-10182608">
        <id>O15305</id>
    </interactant>
    <interactant intactId="EBI-3916242">
        <id>Q96HD9</id>
        <label>ACY3</label>
    </interactant>
    <organismsDiffer>false</organismsDiffer>
    <experiments>9</experiments>
</comment>
<comment type="interaction">
    <interactant intactId="EBI-10182608">
        <id>O15305</id>
    </interactant>
    <interactant intactId="EBI-16439278">
        <id>Q6FHY5</id>
        <label>MEOX2</label>
    </interactant>
    <organismsDiffer>false</organismsDiffer>
    <experiments>3</experiments>
</comment>
<comment type="interaction">
    <interactant intactId="EBI-10182608">
        <id>O15305</id>
    </interactant>
    <interactant intactId="EBI-12143041">
        <id>Q9HBY8-2</id>
        <label>SGK2</label>
    </interactant>
    <organismsDiffer>false</organismsDiffer>
    <experiments>5</experiments>
</comment>
<comment type="subcellular location">
    <subcellularLocation>
        <location>Cytoplasm</location>
    </subcellularLocation>
</comment>
<comment type="alternative products">
    <event type="alternative splicing"/>
    <isoform>
        <id>O15305-1</id>
        <name>1</name>
        <sequence type="displayed"/>
    </isoform>
    <isoform>
        <id>O15305-2</id>
        <name>2</name>
        <sequence type="described" ref="VSP_056228 VSP_056229"/>
    </isoform>
</comment>
<comment type="disease" evidence="4 5 6 7 8 9 10 11 12 13 15 16 17 18">
    <disease id="DI-00333">
        <name>Congenital disorder of glycosylation 1A</name>
        <acronym>CDG1A</acronym>
        <description>A form of congenital disorder of glycosylation, a multisystem disorder caused by a defect in glycoprotein biosynthesis and characterized by under-glycosylated serum glycoproteins. Congenital disorders of glycosylation result in a wide variety of clinical features, such as defects in the nervous system development, psychomotor retardation, dysmorphic features, hypotonia, coagulation disorders, and immunodeficiency. The broad spectrum of features reflects the critical role of N-glycoproteins during embryonic development, differentiation, and maintenance of cell functions. CDG1A is an autosomal recessive disorder characterized by a severe encephalopathy with axial hypotonia, abnormal eye movement, and pronounced psychomotor retardation, as well as peripheral neuropathy, cerebellar hypoplasia, and retinitis pigmentosa. Patients show a peculiar distribution of subcutaneous fat, nipple retraction, and hypogonadism.</description>
        <dbReference type="MIM" id="212065"/>
    </disease>
    <text>The disease is caused by variants affecting the gene represented in this entry.</text>
</comment>
<comment type="similarity">
    <text evidence="21">Belongs to the eukaryotic PMM family.</text>
</comment>
<sequence>MAAPGPALCLFDVDGTLTAPRQKITKEMDDFLQKLRQKIKIGVVGGSDFEKVQEQLGNDVVEKYDYVFPENGLVAYKDGKLLCRQNIQSHLGEALIQDLINYCLSYIAKIKLPKKRGTFIEFRNGMLNVSPIGRSCSQEERIEFYELDKKENIRQKFVADLRKEFAGKGLTFSIGGQISFDVFPDGWDKRYCLRHVENDGYKTIYFFGDKTMPGGNDHEIFTDPRTMGYSVTAPEDTRRICELLFS</sequence>
<gene>
    <name type="primary">PMM2</name>
</gene>
<dbReference type="EC" id="5.4.2.8" evidence="14"/>
<dbReference type="EMBL" id="U85773">
    <property type="protein sequence ID" value="AAC51368.1"/>
    <property type="molecule type" value="mRNA"/>
</dbReference>
<dbReference type="EMBL" id="AF157796">
    <property type="protein sequence ID" value="AAD45895.1"/>
    <property type="molecule type" value="Genomic_DNA"/>
</dbReference>
<dbReference type="EMBL" id="AF157790">
    <property type="protein sequence ID" value="AAD45895.1"/>
    <property type="status" value="JOINED"/>
    <property type="molecule type" value="Genomic_DNA"/>
</dbReference>
<dbReference type="EMBL" id="AF157791">
    <property type="protein sequence ID" value="AAD45895.1"/>
    <property type="status" value="JOINED"/>
    <property type="molecule type" value="Genomic_DNA"/>
</dbReference>
<dbReference type="EMBL" id="AF157792">
    <property type="protein sequence ID" value="AAD45895.1"/>
    <property type="status" value="JOINED"/>
    <property type="molecule type" value="Genomic_DNA"/>
</dbReference>
<dbReference type="EMBL" id="AF157793">
    <property type="protein sequence ID" value="AAD45895.1"/>
    <property type="status" value="JOINED"/>
    <property type="molecule type" value="Genomic_DNA"/>
</dbReference>
<dbReference type="EMBL" id="AF157794">
    <property type="protein sequence ID" value="AAD45895.1"/>
    <property type="status" value="JOINED"/>
    <property type="molecule type" value="Genomic_DNA"/>
</dbReference>
<dbReference type="EMBL" id="AF157795">
    <property type="protein sequence ID" value="AAD45895.1"/>
    <property type="status" value="JOINED"/>
    <property type="molecule type" value="Genomic_DNA"/>
</dbReference>
<dbReference type="EMBL" id="AK291537">
    <property type="protein sequence ID" value="BAF84226.1"/>
    <property type="molecule type" value="mRNA"/>
</dbReference>
<dbReference type="EMBL" id="AK300785">
    <property type="protein sequence ID" value="BAH13346.1"/>
    <property type="molecule type" value="mRNA"/>
</dbReference>
<dbReference type="EMBL" id="AC012173">
    <property type="status" value="NOT_ANNOTATED_CDS"/>
    <property type="molecule type" value="Genomic_DNA"/>
</dbReference>
<dbReference type="EMBL" id="CH471112">
    <property type="protein sequence ID" value="EAW85200.1"/>
    <property type="molecule type" value="Genomic_DNA"/>
</dbReference>
<dbReference type="EMBL" id="CH471112">
    <property type="protein sequence ID" value="EAW85201.1"/>
    <property type="molecule type" value="Genomic_DNA"/>
</dbReference>
<dbReference type="EMBL" id="CH471112">
    <property type="protein sequence ID" value="EAW85202.1"/>
    <property type="molecule type" value="Genomic_DNA"/>
</dbReference>
<dbReference type="EMBL" id="CH471112">
    <property type="protein sequence ID" value="EAW85203.1"/>
    <property type="molecule type" value="Genomic_DNA"/>
</dbReference>
<dbReference type="EMBL" id="BC008310">
    <property type="protein sequence ID" value="AAH08310.1"/>
    <property type="molecule type" value="mRNA"/>
</dbReference>
<dbReference type="CCDS" id="CCDS10536.1">
    <molecule id="O15305-1"/>
</dbReference>
<dbReference type="RefSeq" id="NP_000294.1">
    <molecule id="O15305-1"/>
    <property type="nucleotide sequence ID" value="NM_000303.3"/>
</dbReference>
<dbReference type="PDB" id="2AMY">
    <property type="method" value="X-ray"/>
    <property type="resolution" value="2.09 A"/>
    <property type="chains" value="A=2-246"/>
</dbReference>
<dbReference type="PDB" id="2Q4R">
    <property type="method" value="X-ray"/>
    <property type="resolution" value="2.09 A"/>
    <property type="chains" value="A=2-246"/>
</dbReference>
<dbReference type="PDB" id="7O0C">
    <property type="method" value="X-ray"/>
    <property type="resolution" value="2.80 A"/>
    <property type="chains" value="A/B=1-246"/>
</dbReference>
<dbReference type="PDB" id="7O1B">
    <property type="method" value="X-ray"/>
    <property type="resolution" value="3.08 A"/>
    <property type="chains" value="A/B=1-246"/>
</dbReference>
<dbReference type="PDB" id="7O4G">
    <property type="method" value="X-ray"/>
    <property type="resolution" value="2.66 A"/>
    <property type="chains" value="A/B=1-246"/>
</dbReference>
<dbReference type="PDB" id="7O58">
    <property type="method" value="X-ray"/>
    <property type="resolution" value="1.97 A"/>
    <property type="chains" value="A/B=1-246"/>
</dbReference>
<dbReference type="PDB" id="7O5Z">
    <property type="method" value="X-ray"/>
    <property type="resolution" value="2.07 A"/>
    <property type="chains" value="A/B=1-246"/>
</dbReference>
<dbReference type="PDBsum" id="2AMY"/>
<dbReference type="PDBsum" id="2Q4R"/>
<dbReference type="PDBsum" id="7O0C"/>
<dbReference type="PDBsum" id="7O1B"/>
<dbReference type="PDBsum" id="7O4G"/>
<dbReference type="PDBsum" id="7O58"/>
<dbReference type="PDBsum" id="7O5Z"/>
<dbReference type="SMR" id="O15305"/>
<dbReference type="BioGRID" id="111386">
    <property type="interactions" value="60"/>
</dbReference>
<dbReference type="FunCoup" id="O15305">
    <property type="interactions" value="2078"/>
</dbReference>
<dbReference type="IntAct" id="O15305">
    <property type="interactions" value="23"/>
</dbReference>
<dbReference type="MINT" id="O15305"/>
<dbReference type="STRING" id="9606.ENSP00000268261"/>
<dbReference type="BindingDB" id="O15305"/>
<dbReference type="ChEMBL" id="CHEMBL1741162"/>
<dbReference type="GlyGen" id="O15305">
    <property type="glycosylation" value="5 sites, 1 N-linked glycan (1 site), 1 O-linked glycan (1 site)"/>
</dbReference>
<dbReference type="iPTMnet" id="O15305"/>
<dbReference type="MetOSite" id="O15305"/>
<dbReference type="PhosphoSitePlus" id="O15305"/>
<dbReference type="BioMuta" id="PMM2"/>
<dbReference type="jPOST" id="O15305"/>
<dbReference type="MassIVE" id="O15305"/>
<dbReference type="PaxDb" id="9606-ENSP00000268261"/>
<dbReference type="PeptideAtlas" id="O15305"/>
<dbReference type="ProteomicsDB" id="48574">
    <molecule id="O15305-1"/>
</dbReference>
<dbReference type="ProteomicsDB" id="6798"/>
<dbReference type="Pumba" id="O15305"/>
<dbReference type="Antibodypedia" id="24552">
    <property type="antibodies" value="219 antibodies from 30 providers"/>
</dbReference>
<dbReference type="DNASU" id="5373"/>
<dbReference type="Ensembl" id="ENST00000268261.9">
    <molecule id="O15305-1"/>
    <property type="protein sequence ID" value="ENSP00000268261.4"/>
    <property type="gene ID" value="ENSG00000140650.13"/>
</dbReference>
<dbReference type="Ensembl" id="ENST00000566604.5">
    <molecule id="O15305-2"/>
    <property type="protein sequence ID" value="ENSP00000456774.1"/>
    <property type="gene ID" value="ENSG00000140650.13"/>
</dbReference>
<dbReference type="Ensembl" id="ENST00000683274.1">
    <molecule id="O15305-2"/>
    <property type="protein sequence ID" value="ENSP00000507262.1"/>
    <property type="gene ID" value="ENSG00000140650.13"/>
</dbReference>
<dbReference type="GeneID" id="5373"/>
<dbReference type="KEGG" id="hsa:5373"/>
<dbReference type="MANE-Select" id="ENST00000268261.9">
    <property type="protein sequence ID" value="ENSP00000268261.4"/>
    <property type="RefSeq nucleotide sequence ID" value="NM_000303.3"/>
    <property type="RefSeq protein sequence ID" value="NP_000294.1"/>
</dbReference>
<dbReference type="UCSC" id="uc002czf.5">
    <molecule id="O15305-1"/>
    <property type="organism name" value="human"/>
</dbReference>
<dbReference type="AGR" id="HGNC:9115"/>
<dbReference type="CTD" id="5373"/>
<dbReference type="DisGeNET" id="5373"/>
<dbReference type="GeneCards" id="PMM2"/>
<dbReference type="GeneReviews" id="PMM2"/>
<dbReference type="HGNC" id="HGNC:9115">
    <property type="gene designation" value="PMM2"/>
</dbReference>
<dbReference type="HPA" id="ENSG00000140650">
    <property type="expression patterns" value="Low tissue specificity"/>
</dbReference>
<dbReference type="MalaCards" id="PMM2"/>
<dbReference type="MIM" id="212065">
    <property type="type" value="phenotype"/>
</dbReference>
<dbReference type="MIM" id="601785">
    <property type="type" value="gene"/>
</dbReference>
<dbReference type="neXtProt" id="NX_O15305"/>
<dbReference type="OpenTargets" id="ENSG00000140650"/>
<dbReference type="Orphanet" id="79318">
    <property type="disease" value="PMM2-CDG"/>
</dbReference>
<dbReference type="PharmGKB" id="PA33441"/>
<dbReference type="VEuPathDB" id="HostDB:ENSG00000140650"/>
<dbReference type="eggNOG" id="KOG3189">
    <property type="taxonomic scope" value="Eukaryota"/>
</dbReference>
<dbReference type="GeneTree" id="ENSGT00390000002918"/>
<dbReference type="HOGENOM" id="CLU_065642_1_1_1"/>
<dbReference type="InParanoid" id="O15305"/>
<dbReference type="OMA" id="ISHRVYT"/>
<dbReference type="OrthoDB" id="10264771at2759"/>
<dbReference type="PAN-GO" id="O15305">
    <property type="GO annotations" value="4 GO annotations based on evolutionary models"/>
</dbReference>
<dbReference type="PhylomeDB" id="O15305"/>
<dbReference type="TreeFam" id="TF300874"/>
<dbReference type="BRENDA" id="5.4.2.8">
    <property type="organism ID" value="2681"/>
</dbReference>
<dbReference type="PathwayCommons" id="O15305"/>
<dbReference type="Reactome" id="R-HSA-4043911">
    <property type="pathway name" value="Defective PMM2 causes PMM2-CDG"/>
</dbReference>
<dbReference type="Reactome" id="R-HSA-446205">
    <property type="pathway name" value="Synthesis of GDP-mannose"/>
</dbReference>
<dbReference type="SABIO-RK" id="O15305"/>
<dbReference type="SignaLink" id="O15305"/>
<dbReference type="UniPathway" id="UPA00126">
    <property type="reaction ID" value="UER00424"/>
</dbReference>
<dbReference type="BioGRID-ORCS" id="5373">
    <property type="hits" value="170 hits in 1176 CRISPR screens"/>
</dbReference>
<dbReference type="ChiTaRS" id="PMM2">
    <property type="organism name" value="human"/>
</dbReference>
<dbReference type="EvolutionaryTrace" id="O15305"/>
<dbReference type="GeneWiki" id="PMM2"/>
<dbReference type="GenomeRNAi" id="5373"/>
<dbReference type="Pharos" id="O15305">
    <property type="development level" value="Tchem"/>
</dbReference>
<dbReference type="PRO" id="PR:O15305"/>
<dbReference type="Proteomes" id="UP000005640">
    <property type="component" value="Chromosome 16"/>
</dbReference>
<dbReference type="RNAct" id="O15305">
    <property type="molecule type" value="protein"/>
</dbReference>
<dbReference type="Bgee" id="ENSG00000140650">
    <property type="expression patterns" value="Expressed in body of pancreas and 102 other cell types or tissues"/>
</dbReference>
<dbReference type="ExpressionAtlas" id="O15305">
    <property type="expression patterns" value="baseline and differential"/>
</dbReference>
<dbReference type="GO" id="GO:0005929">
    <property type="term" value="C:cilium"/>
    <property type="evidence" value="ECO:0000314"/>
    <property type="project" value="HPA"/>
</dbReference>
<dbReference type="GO" id="GO:0005829">
    <property type="term" value="C:cytosol"/>
    <property type="evidence" value="ECO:0000314"/>
    <property type="project" value="HPA"/>
</dbReference>
<dbReference type="GO" id="GO:0015630">
    <property type="term" value="C:microtubule cytoskeleton"/>
    <property type="evidence" value="ECO:0000314"/>
    <property type="project" value="HPA"/>
</dbReference>
<dbReference type="GO" id="GO:0043025">
    <property type="term" value="C:neuronal cell body"/>
    <property type="evidence" value="ECO:0007669"/>
    <property type="project" value="Ensembl"/>
</dbReference>
<dbReference type="GO" id="GO:0005654">
    <property type="term" value="C:nucleoplasm"/>
    <property type="evidence" value="ECO:0000314"/>
    <property type="project" value="HPA"/>
</dbReference>
<dbReference type="GO" id="GO:0046872">
    <property type="term" value="F:metal ion binding"/>
    <property type="evidence" value="ECO:0007669"/>
    <property type="project" value="UniProtKB-KW"/>
</dbReference>
<dbReference type="GO" id="GO:0004615">
    <property type="term" value="F:phosphomannomutase activity"/>
    <property type="evidence" value="ECO:0000269"/>
    <property type="project" value="Reactome"/>
</dbReference>
<dbReference type="GO" id="GO:0061729">
    <property type="term" value="P:GDP-D-mannose biosynthetic process from fructose-6-phosphate"/>
    <property type="evidence" value="ECO:0000315"/>
    <property type="project" value="FlyBase"/>
</dbReference>
<dbReference type="GO" id="GO:0009298">
    <property type="term" value="P:GDP-mannose biosynthetic process"/>
    <property type="evidence" value="ECO:0000304"/>
    <property type="project" value="Reactome"/>
</dbReference>
<dbReference type="GO" id="GO:0061728">
    <property type="term" value="P:GDP-mannose biosynthetic process from mannose"/>
    <property type="evidence" value="ECO:0000315"/>
    <property type="project" value="FlyBase"/>
</dbReference>
<dbReference type="GO" id="GO:0006013">
    <property type="term" value="P:mannose metabolic process"/>
    <property type="evidence" value="ECO:0000318"/>
    <property type="project" value="GO_Central"/>
</dbReference>
<dbReference type="GO" id="GO:0006486">
    <property type="term" value="P:protein glycosylation"/>
    <property type="evidence" value="ECO:0000304"/>
    <property type="project" value="ProtInc"/>
</dbReference>
<dbReference type="GO" id="GO:0006487">
    <property type="term" value="P:protein N-linked glycosylation"/>
    <property type="evidence" value="ECO:0000318"/>
    <property type="project" value="GO_Central"/>
</dbReference>
<dbReference type="CDD" id="cd02585">
    <property type="entry name" value="HAD_PMM"/>
    <property type="match status" value="1"/>
</dbReference>
<dbReference type="FunFam" id="3.30.1240.20:FF:000001">
    <property type="entry name" value="Phosphomannomutase"/>
    <property type="match status" value="1"/>
</dbReference>
<dbReference type="FunFam" id="3.40.50.1000:FF:000216">
    <property type="entry name" value="Phosphomannomutase"/>
    <property type="match status" value="2"/>
</dbReference>
<dbReference type="Gene3D" id="3.30.1240.20">
    <property type="match status" value="1"/>
</dbReference>
<dbReference type="Gene3D" id="3.40.50.1000">
    <property type="entry name" value="HAD superfamily/HAD-like"/>
    <property type="match status" value="1"/>
</dbReference>
<dbReference type="InterPro" id="IPR036412">
    <property type="entry name" value="HAD-like_sf"/>
</dbReference>
<dbReference type="InterPro" id="IPR006379">
    <property type="entry name" value="HAD-SF_hydro_IIB"/>
</dbReference>
<dbReference type="InterPro" id="IPR023214">
    <property type="entry name" value="HAD_sf"/>
</dbReference>
<dbReference type="InterPro" id="IPR005002">
    <property type="entry name" value="PMM"/>
</dbReference>
<dbReference type="InterPro" id="IPR043169">
    <property type="entry name" value="PMM_cap"/>
</dbReference>
<dbReference type="NCBIfam" id="TIGR01484">
    <property type="entry name" value="HAD-SF-IIB"/>
    <property type="match status" value="1"/>
</dbReference>
<dbReference type="PANTHER" id="PTHR10466">
    <property type="entry name" value="PHOSPHOMANNOMUTASE"/>
    <property type="match status" value="1"/>
</dbReference>
<dbReference type="PANTHER" id="PTHR10466:SF2">
    <property type="entry name" value="PHOSPHOMANNOMUTASE 2"/>
    <property type="match status" value="1"/>
</dbReference>
<dbReference type="Pfam" id="PF03332">
    <property type="entry name" value="PMM"/>
    <property type="match status" value="1"/>
</dbReference>
<dbReference type="SFLD" id="SFLDF00445">
    <property type="entry name" value="alpha-phosphomannomutase"/>
    <property type="match status" value="1"/>
</dbReference>
<dbReference type="SFLD" id="SFLDS00003">
    <property type="entry name" value="Haloacid_Dehalogenase"/>
    <property type="match status" value="1"/>
</dbReference>
<dbReference type="SUPFAM" id="SSF56784">
    <property type="entry name" value="HAD-like"/>
    <property type="match status" value="1"/>
</dbReference>
<organism>
    <name type="scientific">Homo sapiens</name>
    <name type="common">Human</name>
    <dbReference type="NCBI Taxonomy" id="9606"/>
    <lineage>
        <taxon>Eukaryota</taxon>
        <taxon>Metazoa</taxon>
        <taxon>Chordata</taxon>
        <taxon>Craniata</taxon>
        <taxon>Vertebrata</taxon>
        <taxon>Euteleostomi</taxon>
        <taxon>Mammalia</taxon>
        <taxon>Eutheria</taxon>
        <taxon>Euarchontoglires</taxon>
        <taxon>Primates</taxon>
        <taxon>Haplorrhini</taxon>
        <taxon>Catarrhini</taxon>
        <taxon>Hominidae</taxon>
        <taxon>Homo</taxon>
    </lineage>
</organism>
<evidence type="ECO:0000250" key="1">
    <source>
        <dbReference type="UniProtKB" id="P31353"/>
    </source>
</evidence>
<evidence type="ECO:0000250" key="2">
    <source>
        <dbReference type="UniProtKB" id="Q92871"/>
    </source>
</evidence>
<evidence type="ECO:0000250" key="3">
    <source>
        <dbReference type="UniProtKB" id="Q9Z2M7"/>
    </source>
</evidence>
<evidence type="ECO:0000269" key="4">
    <source>
    </source>
</evidence>
<evidence type="ECO:0000269" key="5">
    <source>
    </source>
</evidence>
<evidence type="ECO:0000269" key="6">
    <source>
    </source>
</evidence>
<evidence type="ECO:0000269" key="7">
    <source>
    </source>
</evidence>
<evidence type="ECO:0000269" key="8">
    <source>
    </source>
</evidence>
<evidence type="ECO:0000269" key="9">
    <source>
    </source>
</evidence>
<evidence type="ECO:0000269" key="10">
    <source>
    </source>
</evidence>
<evidence type="ECO:0000269" key="11">
    <source>
    </source>
</evidence>
<evidence type="ECO:0000269" key="12">
    <source>
    </source>
</evidence>
<evidence type="ECO:0000269" key="13">
    <source>
    </source>
</evidence>
<evidence type="ECO:0000269" key="14">
    <source>
    </source>
</evidence>
<evidence type="ECO:0000269" key="15">
    <source>
    </source>
</evidence>
<evidence type="ECO:0000269" key="16">
    <source>
    </source>
</evidence>
<evidence type="ECO:0000269" key="17">
    <source>
    </source>
</evidence>
<evidence type="ECO:0000269" key="18">
    <source>
    </source>
</evidence>
<evidence type="ECO:0000303" key="19">
    <source>
    </source>
</evidence>
<evidence type="ECO:0000303" key="20">
    <source>
    </source>
</evidence>
<evidence type="ECO:0000305" key="21"/>
<evidence type="ECO:0007744" key="22">
    <source>
    </source>
</evidence>
<evidence type="ECO:0007744" key="23">
    <source>
    </source>
</evidence>
<evidence type="ECO:0007829" key="24">
    <source>
        <dbReference type="PDB" id="2AMY"/>
    </source>
</evidence>
<evidence type="ECO:0007829" key="25">
    <source>
        <dbReference type="PDB" id="7O58"/>
    </source>
</evidence>
<feature type="initiator methionine" description="Removed" evidence="22 23">
    <location>
        <position position="1"/>
    </location>
</feature>
<feature type="chain" id="PRO_0000199694" description="Phosphomannomutase 2">
    <location>
        <begin position="2"/>
        <end position="246"/>
    </location>
</feature>
<feature type="active site" description="Nucleophile" evidence="2">
    <location>
        <position position="12"/>
    </location>
</feature>
<feature type="active site" description="Proton donor/acceptor" evidence="2">
    <location>
        <position position="14"/>
    </location>
</feature>
<feature type="binding site" evidence="2">
    <location>
        <position position="12"/>
    </location>
    <ligand>
        <name>Mg(2+)</name>
        <dbReference type="ChEBI" id="CHEBI:18420"/>
        <label>1</label>
    </ligand>
</feature>
<feature type="binding site" evidence="2">
    <location>
        <position position="14"/>
    </location>
    <ligand>
        <name>Mg(2+)</name>
        <dbReference type="ChEBI" id="CHEBI:18420"/>
        <label>1</label>
    </ligand>
</feature>
<feature type="binding site" evidence="2">
    <location>
        <position position="21"/>
    </location>
    <ligand>
        <name>alpha-D-mannose 1-phosphate</name>
        <dbReference type="ChEBI" id="CHEBI:58409"/>
    </ligand>
</feature>
<feature type="binding site" evidence="2">
    <location>
        <position position="123"/>
    </location>
    <ligand>
        <name>alpha-D-mannose 1-phosphate</name>
        <dbReference type="ChEBI" id="CHEBI:58409"/>
    </ligand>
</feature>
<feature type="binding site" evidence="2">
    <location>
        <position position="134"/>
    </location>
    <ligand>
        <name>alpha-D-mannose 1-phosphate</name>
        <dbReference type="ChEBI" id="CHEBI:58409"/>
    </ligand>
</feature>
<feature type="binding site" evidence="2">
    <location>
        <position position="141"/>
    </location>
    <ligand>
        <name>alpha-D-mannose 1-phosphate</name>
        <dbReference type="ChEBI" id="CHEBI:58409"/>
    </ligand>
</feature>
<feature type="binding site" evidence="2">
    <location>
        <position position="179"/>
    </location>
    <ligand>
        <name>alpha-D-mannose 1-phosphate</name>
        <dbReference type="ChEBI" id="CHEBI:58409"/>
    </ligand>
</feature>
<feature type="binding site" evidence="2">
    <location>
        <position position="181"/>
    </location>
    <ligand>
        <name>alpha-D-mannose 1-phosphate</name>
        <dbReference type="ChEBI" id="CHEBI:58409"/>
    </ligand>
</feature>
<feature type="binding site" evidence="1">
    <location>
        <position position="209"/>
    </location>
    <ligand>
        <name>Mg(2+)</name>
        <dbReference type="ChEBI" id="CHEBI:18420"/>
        <label>1</label>
    </ligand>
</feature>
<feature type="binding site" evidence="2">
    <location>
        <position position="221"/>
    </location>
    <ligand>
        <name>Mg(2+)</name>
        <dbReference type="ChEBI" id="CHEBI:18420"/>
        <label>2</label>
    </ligand>
</feature>
<feature type="binding site" evidence="2">
    <location>
        <position position="223"/>
    </location>
    <ligand>
        <name>Mg(2+)</name>
        <dbReference type="ChEBI" id="CHEBI:18420"/>
        <label>2</label>
    </ligand>
</feature>
<feature type="binding site" evidence="2">
    <location>
        <position position="226"/>
    </location>
    <ligand>
        <name>Mg(2+)</name>
        <dbReference type="ChEBI" id="CHEBI:18420"/>
        <label>2</label>
    </ligand>
</feature>
<feature type="modified residue" description="N-acetylalanine" evidence="22 23">
    <location>
        <position position="2"/>
    </location>
</feature>
<feature type="modified residue" description="N6-acetyllysine" evidence="3">
    <location>
        <position position="149"/>
    </location>
</feature>
<feature type="splice variant" id="VSP_056228" description="In isoform 2." evidence="19">
    <original>GTF</original>
    <variation>KKI</variation>
    <location>
        <begin position="117"/>
        <end position="119"/>
    </location>
</feature>
<feature type="splice variant" id="VSP_056229" description="In isoform 2." evidence="19">
    <location>
        <begin position="120"/>
        <end position="246"/>
    </location>
</feature>
<feature type="sequence variant" id="VAR_022469" description="In CDG1A; dbSNP:rs104894532." evidence="9 10 13">
    <original>C</original>
    <variation>Y</variation>
    <location>
        <position position="9"/>
    </location>
</feature>
<feature type="sequence variant" id="VAR_022470" description="In CDG1A." evidence="9 10">
    <original>F</original>
    <variation>C</variation>
    <location>
        <position position="11"/>
    </location>
</feature>
<feature type="sequence variant" id="VAR_022471" description="In CDG1A." evidence="12">
    <original>G</original>
    <variation>E</variation>
    <location>
        <position position="15"/>
    </location>
</feature>
<feature type="sequence variant" id="VAR_022472" description="In CDG1A; reduction of activity; dbSNP:rs949271895." evidence="13">
    <original>P</original>
    <variation>S</variation>
    <location>
        <position position="20"/>
    </location>
</feature>
<feature type="sequence variant" id="VAR_022473" description="In CDG1A; dbSNP:rs104894533." evidence="9 13">
    <original>L</original>
    <variation>R</variation>
    <location>
        <position position="32"/>
    </location>
</feature>
<feature type="sequence variant" id="VAR_022474" description="In CDG1A; partial loss of activity." evidence="13">
    <original>Q</original>
    <variation>H</variation>
    <location>
        <position position="37"/>
    </location>
</feature>
<feature type="sequence variant" id="VAR_022133" description="In dbSNP:rs2304472.">
    <original>Q</original>
    <variation>L</variation>
    <location>
        <position position="37"/>
    </location>
</feature>
<feature type="sequence variant" id="VAR_022475" description="In dbSNP:rs755402538." evidence="12 13">
    <original>G</original>
    <variation>R</variation>
    <location>
        <position position="42"/>
    </location>
</feature>
<feature type="sequence variant" id="VAR_006093" description="In CDG1A; dbSNP:rs104894534." evidence="9 15">
    <original>V</original>
    <variation>A</variation>
    <location>
        <position position="44"/>
    </location>
</feature>
<feature type="sequence variant" id="VAR_022563" description="In CDG1A." evidence="13">
    <original>V</original>
    <variation>L</variation>
    <location>
        <position position="44"/>
    </location>
</feature>
<feature type="sequence variant" id="VAR_022476" description="In CDG1A." evidence="12">
    <original>Y</original>
    <variation>C</variation>
    <location>
        <position position="64"/>
    </location>
</feature>
<feature type="sequence variant" id="VAR_006094" description="In CDG1A; dbSNP:rs104894527." evidence="9 13">
    <original>D</original>
    <variation>Y</variation>
    <location>
        <position position="65"/>
    </location>
</feature>
<feature type="sequence variant" id="VAR_022477" description="In CDG1A; dbSNP:rs1318611010." evidence="9 10">
    <original>V</original>
    <variation>M</variation>
    <location>
        <position position="67"/>
    </location>
</feature>
<feature type="sequence variant" id="VAR_022478" description="In CDG1A; dbSNP:rs769648248." evidence="9 13">
    <original>P</original>
    <variation>S</variation>
    <location>
        <position position="69"/>
    </location>
</feature>
<feature type="sequence variant" id="VAR_022479" description="In CDG1A; dbSNP:rs1440183322." evidence="9">
    <original>Y</original>
    <variation>C</variation>
    <location>
        <position position="76"/>
    </location>
</feature>
<feature type="sequence variant" id="VAR_022480" description="In CDG1A." evidence="12">
    <original>E</original>
    <variation>A</variation>
    <location>
        <position position="93"/>
    </location>
</feature>
<feature type="sequence variant" id="VAR_006095" description="In CDG1A; dbSNP:rs769839273." evidence="9">
    <original>N</original>
    <variation>K</variation>
    <location>
        <position position="101"/>
    </location>
</feature>
<feature type="sequence variant" id="VAR_022481" description="In CDG1A." evidence="9 13">
    <original>C</original>
    <variation>F</variation>
    <location>
        <position position="103"/>
    </location>
</feature>
<feature type="sequence variant" id="VAR_012344" description="In CDG1A; dbSNP:rs770458492." evidence="11">
    <original>L</original>
    <variation>V</variation>
    <location>
        <position position="104"/>
    </location>
</feature>
<feature type="sequence variant" id="VAR_006096" description="In CDG1A; dbSNP:rs387906824." evidence="9">
    <original>Y</original>
    <variation>C</variation>
    <location>
        <position position="106"/>
    </location>
</feature>
<feature type="sequence variant" id="VAR_006097" description="In CDG1A; dbSNP:rs200503569." evidence="9 13">
    <original>A</original>
    <variation>V</variation>
    <location>
        <position position="108"/>
    </location>
</feature>
<feature type="sequence variant" id="VAR_006098" description="In CDG1A; dbSNP:rs80338700." evidence="9 10 13">
    <original>P</original>
    <variation>L</variation>
    <location>
        <position position="113"/>
    </location>
</feature>
<feature type="sequence variant" id="VAR_006099" description="In CDG1A; loss of activity; dbSNP:rs104894530." evidence="7 9 10 18">
    <original>G</original>
    <variation>R</variation>
    <location>
        <position position="117"/>
    </location>
</feature>
<feature type="sequence variant" id="VAR_006100" description="In CDG1A; partial loss of activity; dbSNP:rs80338701." evidence="7 8 9 10 13">
    <original>F</original>
    <variation>L</variation>
    <location>
        <position position="119"/>
    </location>
</feature>
<feature type="sequence variant" id="VAR_022482" description="In CDG1A; dbSNP:rs368582085." evidence="9">
    <original>I</original>
    <variation>T</variation>
    <location>
        <position position="120"/>
    </location>
</feature>
<feature type="sequence variant" id="VAR_006101" description="In CDG1A; dbSNP:rs141498002." evidence="9 10 13">
    <original>R</original>
    <variation>Q</variation>
    <location>
        <position position="123"/>
    </location>
</feature>
<feature type="sequence variant" id="VAR_006102" description="In CDG1A; dbSNP:rs104894525." evidence="9 10 13">
    <original>V</original>
    <variation>M</variation>
    <location>
        <position position="129"/>
    </location>
</feature>
<feature type="sequence variant" id="VAR_006103" description="In CDG1A; dbSNP:rs1274547742." evidence="9 13">
    <original>P</original>
    <variation>A</variation>
    <location>
        <position position="131"/>
    </location>
</feature>
<feature type="sequence variant" id="VAR_022483" description="In CDG1A; slightly reduced activity; dbSNP:rs753632453." evidence="13">
    <original>I</original>
    <variation>F</variation>
    <location>
        <position position="132"/>
    </location>
</feature>
<feature type="sequence variant" id="VAR_022484" description="In CDG1A; dbSNP:rs80338702." evidence="8 9">
    <original>I</original>
    <variation>N</variation>
    <location>
        <position position="132"/>
    </location>
</feature>
<feature type="sequence variant" id="VAR_006104" description="In CDG1A; dbSNP:rs80338702." evidence="9 13">
    <original>I</original>
    <variation>T</variation>
    <location>
        <position position="132"/>
    </location>
</feature>
<feature type="sequence variant" id="VAR_009232" description="In CDG1A; this mutation seems to disrupt a splicing enhancer sequence and thus results in most cases in a protein with exon 5 skipped; slightly reduced activity; dbSNP:rs80338703." evidence="6 9 13">
    <original>E</original>
    <variation>K</variation>
    <location>
        <position position="139"/>
    </location>
</feature>
<feature type="sequence variant" id="VAR_022485" description="In CDG1A; loss of activity; dbSNP:rs746610168." evidence="13">
    <original>R</original>
    <variation>C</variation>
    <location>
        <position position="141"/>
    </location>
</feature>
<feature type="sequence variant" id="VAR_006105" description="In CDG1A; frequent mutation; loss of activity; observed in heterozygous patients; homozygosis of this mutation is incompatible with life; dbSNP:rs28936415." evidence="6 7 8 9 10 13">
    <original>R</original>
    <variation>H</variation>
    <location>
        <position position="141"/>
    </location>
</feature>
<feature type="sequence variant" id="VAR_022486" description="In CDG1A; dbSNP:rs150719105." evidence="4">
    <original>F</original>
    <variation>L</variation>
    <location>
        <position position="144"/>
    </location>
</feature>
<feature type="sequence variant" id="VAR_022487" description="In CDG1A; dbSNP:rs148032587." evidence="8 9">
    <original>D</original>
    <variation>N</variation>
    <location>
        <position position="148"/>
    </location>
</feature>
<feature type="sequence variant" id="VAR_022488" description="In CDG1A." evidence="9">
    <original>E</original>
    <variation>G</variation>
    <location>
        <position position="151"/>
    </location>
</feature>
<feature type="sequence variant" id="VAR_022489" description="In CDG1A; dbSNP:rs150577656." evidence="9 13">
    <original>I</original>
    <variation>T</variation>
    <location>
        <position position="153"/>
    </location>
</feature>
<feature type="sequence variant" id="VAR_022490" description="In CDG1A; dbSNP:rs190521996." evidence="9 13">
    <original>F</original>
    <variation>S</variation>
    <location>
        <position position="157"/>
    </location>
</feature>
<feature type="sequence variant" id="VAR_006106" description="In CDG1A; dbSNP:rs104894526." evidence="9 13">
    <original>R</original>
    <variation>W</variation>
    <location>
        <position position="162"/>
    </location>
</feature>
<feature type="sequence variant" id="VAR_022491" description="In CDG1A." evidence="9 10">
    <original>F</original>
    <variation>V</variation>
    <location>
        <position position="172"/>
    </location>
</feature>
<feature type="sequence variant" id="VAR_006107" description="In CDG1A; dbSNP:rs941830625." evidence="9 10">
    <original>G</original>
    <variation>R</variation>
    <location>
        <position position="175"/>
    </location>
</feature>
<feature type="sequence variant" id="VAR_022492" description="In CDG1A; loss of activity; dbSNP:rs940938678." evidence="13">
    <original>G</original>
    <variation>V</variation>
    <location>
        <position position="176"/>
    </location>
</feature>
<feature type="sequence variant" id="VAR_022493" description="In CDG1A; partial loss of activity; dbSNP:rs771162235." evidence="13">
    <original>Q</original>
    <variation>H</variation>
    <location>
        <position position="177"/>
    </location>
</feature>
<feature type="sequence variant" id="VAR_022494" description="In CDG1A; dbSNP:rs780581250." evidence="8 9 10">
    <original>F</original>
    <variation>S</variation>
    <location>
        <position position="183"/>
    </location>
</feature>
<feature type="sequence variant" id="VAR_022495" description="In CDG1A; dbSNP:rs1386173214." evidence="9 10">
    <original>D</original>
    <variation>G</variation>
    <location>
        <position position="185"/>
    </location>
</feature>
<feature type="sequence variant" id="VAR_006108" description="In CDG1A; severe; dbSNP:rs80338704." evidence="9">
    <original>D</original>
    <variation>G</variation>
    <location>
        <position position="188"/>
    </location>
</feature>
<feature type="sequence variant" id="VAR_022496" description="In CDG1A; normal activity but lower affinity for alpha-D-mannose 1-phosphate." evidence="7 9 10">
    <original>C</original>
    <variation>G</variation>
    <location>
        <position position="192"/>
    </location>
</feature>
<feature type="sequence variant" id="VAR_022497" description="In CDG1A; dbSNP:rs1596489887." evidence="9">
    <original>H</original>
    <variation>R</variation>
    <location>
        <position position="195"/>
    </location>
</feature>
<feature type="sequence variant" id="VAR_022498" description="In dbSNP:rs34258285." evidence="9 13">
    <original>E</original>
    <variation>A</variation>
    <location>
        <position position="197"/>
    </location>
</feature>
<feature type="sequence variant" id="VAR_022499" description="In CDG1A." evidence="9">
    <original>F</original>
    <variation>S</variation>
    <location>
        <position position="206"/>
    </location>
</feature>
<feature type="sequence variant" id="VAR_006109" description="In CDG1A; dbSNP:rs398123309." evidence="8 9">
    <original>G</original>
    <variation>A</variation>
    <location>
        <position position="208"/>
    </location>
</feature>
<feature type="sequence variant" id="VAR_022134" description="In dbSNP:rs3743808.">
    <original>M</original>
    <variation>V</variation>
    <location>
        <position position="212"/>
    </location>
</feature>
<feature type="sequence variant" id="VAR_022500" description="In CDG1A; dbSNP:rs1555453238." evidence="12 13">
    <original>G</original>
    <variation>S</variation>
    <location>
        <position position="214"/>
    </location>
</feature>
<feature type="sequence variant" id="VAR_006110" description="In CDG1A; dbSNP:rs78290141." evidence="9">
    <original>N</original>
    <variation>I</variation>
    <location>
        <position position="216"/>
    </location>
</feature>
<feature type="sequence variant" id="VAR_022501" description="In CDG1A; dbSNP:rs78290141." evidence="9 10">
    <original>N</original>
    <variation>S</variation>
    <location>
        <position position="216"/>
    </location>
</feature>
<feature type="sequence variant" id="VAR_022502" description="In CDG1A; dbSNP:rs752614554." evidence="9 10">
    <original>D</original>
    <variation>E</variation>
    <location>
        <position position="217"/>
    </location>
</feature>
<feature type="sequence variant" id="VAR_022503" description="In CDG1A; dbSNP:rs80338705." evidence="9">
    <original>H</original>
    <variation>L</variation>
    <location>
        <position position="218"/>
    </location>
</feature>
<feature type="sequence variant" id="VAR_006111" description="In CDG1A; normal activity but lower affinity for alpha-D-mannose 1-phosphate; dbSNP:rs104894531." evidence="7 9 10 18">
    <original>D</original>
    <variation>E</variation>
    <location>
        <position position="223"/>
    </location>
</feature>
<feature type="sequence variant" id="VAR_022504" description="In CDG1A; dbSNP:rs201960869." evidence="12">
    <original>D</original>
    <variation>N</variation>
    <location>
        <position position="223"/>
    </location>
</feature>
<feature type="sequence variant" id="VAR_022505" description="In CDG1A; dbSNP:rs80338706." evidence="9 13">
    <original>T</original>
    <variation>S</variation>
    <location>
        <position position="226"/>
    </location>
</feature>
<feature type="sequence variant" id="VAR_022506" description="In CDG1A; dbSNP:rs558826439." evidence="9">
    <original>G</original>
    <variation>C</variation>
    <location>
        <position position="228"/>
    </location>
</feature>
<feature type="sequence variant" id="VAR_022507" description="In CDG1A; dbSNP:rs558826439." evidence="9 10">
    <original>G</original>
    <variation>R</variation>
    <location>
        <position position="228"/>
    </location>
</feature>
<feature type="sequence variant" id="VAR_006112" description="In CDG1A; dbSNP:rs398123311." evidence="4 9">
    <original>Y</original>
    <variation>S</variation>
    <location>
        <position position="229"/>
    </location>
</feature>
<feature type="sequence variant" id="VAR_006113" description="In CDG1A; dbSNP:rs80338707." evidence="8 9 10 13 15">
    <original>V</original>
    <variation>M</variation>
    <location>
        <position position="231"/>
    </location>
</feature>
<feature type="sequence variant" id="VAR_006114" description="In CDG1A; uncertain significance; dbSNP:rs2060937559." evidence="9">
    <original>A</original>
    <variation>T</variation>
    <location>
        <position position="233"/>
    </location>
</feature>
<feature type="sequence variant" id="VAR_006115" description="In CDG1A; dbSNP:rs80338708." evidence="8 9 13">
    <original>T</original>
    <variation>M</variation>
    <location>
        <position position="237"/>
    </location>
</feature>
<feature type="sequence variant" id="VAR_022508" description="In CDG1A; loss of activity; dbSNP:rs80338708." evidence="7 9 10 13">
    <original>T</original>
    <variation>R</variation>
    <location>
        <position position="237"/>
    </location>
</feature>
<feature type="sequence variant" id="VAR_022509" description="In CDG1A; dbSNP:rs142459706." evidence="9">
    <original>R</original>
    <variation>G</variation>
    <location>
        <position position="238"/>
    </location>
</feature>
<feature type="sequence variant" id="VAR_006116" description="In CDG1A; dbSNP:rs151319324." evidence="4">
    <original>R</original>
    <variation>P</variation>
    <location>
        <position position="238"/>
    </location>
</feature>
<feature type="sequence variant" id="VAR_022510" description="In CDG1A; dbSNP:rs80338709." evidence="9 13">
    <original>C</original>
    <variation>S</variation>
    <location>
        <position position="241"/>
    </location>
</feature>
<feature type="strand" evidence="25">
    <location>
        <begin position="7"/>
        <end position="12"/>
    </location>
</feature>
<feature type="turn" evidence="25">
    <location>
        <begin position="15"/>
        <end position="17"/>
    </location>
</feature>
<feature type="helix" evidence="25">
    <location>
        <begin position="26"/>
        <end position="36"/>
    </location>
</feature>
<feature type="strand" evidence="25">
    <location>
        <begin position="39"/>
        <end position="44"/>
    </location>
</feature>
<feature type="helix" evidence="25">
    <location>
        <begin position="49"/>
        <end position="56"/>
    </location>
</feature>
<feature type="helix" evidence="25">
    <location>
        <begin position="60"/>
        <end position="63"/>
    </location>
</feature>
<feature type="strand" evidence="25">
    <location>
        <begin position="64"/>
        <end position="68"/>
    </location>
</feature>
<feature type="helix" evidence="25">
    <location>
        <begin position="69"/>
        <end position="72"/>
    </location>
</feature>
<feature type="strand" evidence="24">
    <location>
        <begin position="74"/>
        <end position="77"/>
    </location>
</feature>
<feature type="strand" evidence="24">
    <location>
        <begin position="80"/>
        <end position="84"/>
    </location>
</feature>
<feature type="helix" evidence="25">
    <location>
        <begin position="87"/>
        <end position="91"/>
    </location>
</feature>
<feature type="helix" evidence="25">
    <location>
        <begin position="93"/>
        <end position="109"/>
    </location>
</feature>
<feature type="strand" evidence="25">
    <location>
        <begin position="119"/>
        <end position="122"/>
    </location>
</feature>
<feature type="strand" evidence="25">
    <location>
        <begin position="127"/>
        <end position="129"/>
    </location>
</feature>
<feature type="helix" evidence="25">
    <location>
        <begin position="138"/>
        <end position="151"/>
    </location>
</feature>
<feature type="helix" evidence="25">
    <location>
        <begin position="153"/>
        <end position="164"/>
    </location>
</feature>
<feature type="turn" evidence="25">
    <location>
        <begin position="165"/>
        <end position="167"/>
    </location>
</feature>
<feature type="strand" evidence="25">
    <location>
        <begin position="168"/>
        <end position="175"/>
    </location>
</feature>
<feature type="turn" evidence="25">
    <location>
        <begin position="176"/>
        <end position="178"/>
    </location>
</feature>
<feature type="strand" evidence="25">
    <location>
        <begin position="179"/>
        <end position="184"/>
    </location>
</feature>
<feature type="helix" evidence="25">
    <location>
        <begin position="189"/>
        <end position="195"/>
    </location>
</feature>
<feature type="turn" evidence="25">
    <location>
        <begin position="196"/>
        <end position="198"/>
    </location>
</feature>
<feature type="strand" evidence="25">
    <location>
        <begin position="202"/>
        <end position="209"/>
    </location>
</feature>
<feature type="helix" evidence="25">
    <location>
        <begin position="218"/>
        <end position="222"/>
    </location>
</feature>
<feature type="strand" evidence="25">
    <location>
        <begin position="226"/>
        <end position="230"/>
    </location>
</feature>
<feature type="helix" evidence="25">
    <location>
        <begin position="234"/>
        <end position="245"/>
    </location>
</feature>